<feature type="chain" id="PRO_0000400296" description="Mycothiol acetyltransferase">
    <location>
        <begin position="1"/>
        <end position="307"/>
    </location>
</feature>
<feature type="domain" description="N-acetyltransferase 1" evidence="1">
    <location>
        <begin position="12"/>
        <end position="152"/>
    </location>
</feature>
<feature type="domain" description="N-acetyltransferase 2" evidence="1">
    <location>
        <begin position="160"/>
        <end position="307"/>
    </location>
</feature>
<feature type="binding site" evidence="1">
    <location>
        <position position="43"/>
    </location>
    <ligand>
        <name>1D-myo-inositol 2-(L-cysteinylamino)-2-deoxy-alpha-D-glucopyranoside</name>
        <dbReference type="ChEBI" id="CHEBI:58887"/>
    </ligand>
</feature>
<feature type="binding site" evidence="1">
    <location>
        <begin position="87"/>
        <end position="89"/>
    </location>
    <ligand>
        <name>acetyl-CoA</name>
        <dbReference type="ChEBI" id="CHEBI:57288"/>
        <label>1</label>
    </ligand>
</feature>
<feature type="binding site" evidence="1">
    <location>
        <position position="187"/>
    </location>
    <ligand>
        <name>1D-myo-inositol 2-(L-cysteinylamino)-2-deoxy-alpha-D-glucopyranoside</name>
        <dbReference type="ChEBI" id="CHEBI:58887"/>
    </ligand>
</feature>
<feature type="binding site" evidence="1">
    <location>
        <position position="227"/>
    </location>
    <ligand>
        <name>1D-myo-inositol 2-(L-cysteinylamino)-2-deoxy-alpha-D-glucopyranoside</name>
        <dbReference type="ChEBI" id="CHEBI:58887"/>
    </ligand>
</feature>
<feature type="binding site" evidence="1">
    <location>
        <position position="239"/>
    </location>
    <ligand>
        <name>1D-myo-inositol 2-(L-cysteinylamino)-2-deoxy-alpha-D-glucopyranoside</name>
        <dbReference type="ChEBI" id="CHEBI:58887"/>
    </ligand>
</feature>
<feature type="binding site" evidence="1">
    <location>
        <begin position="243"/>
        <end position="245"/>
    </location>
    <ligand>
        <name>acetyl-CoA</name>
        <dbReference type="ChEBI" id="CHEBI:57288"/>
        <label>2</label>
    </ligand>
</feature>
<feature type="binding site" evidence="1">
    <location>
        <begin position="250"/>
        <end position="256"/>
    </location>
    <ligand>
        <name>acetyl-CoA</name>
        <dbReference type="ChEBI" id="CHEBI:57288"/>
        <label>2</label>
    </ligand>
</feature>
<feature type="binding site" evidence="1">
    <location>
        <position position="278"/>
    </location>
    <ligand>
        <name>1D-myo-inositol 2-(L-cysteinylamino)-2-deoxy-alpha-D-glucopyranoside</name>
        <dbReference type="ChEBI" id="CHEBI:58887"/>
    </ligand>
</feature>
<comment type="function">
    <text evidence="1">Catalyzes the transfer of acetyl from acetyl-CoA to desacetylmycothiol (Cys-GlcN-Ins) to form mycothiol.</text>
</comment>
<comment type="catalytic activity">
    <reaction evidence="1">
        <text>1D-myo-inositol 2-(L-cysteinylamino)-2-deoxy-alpha-D-glucopyranoside + acetyl-CoA = mycothiol + CoA + H(+)</text>
        <dbReference type="Rhea" id="RHEA:26172"/>
        <dbReference type="ChEBI" id="CHEBI:15378"/>
        <dbReference type="ChEBI" id="CHEBI:16768"/>
        <dbReference type="ChEBI" id="CHEBI:57287"/>
        <dbReference type="ChEBI" id="CHEBI:57288"/>
        <dbReference type="ChEBI" id="CHEBI:58887"/>
        <dbReference type="EC" id="2.3.1.189"/>
    </reaction>
</comment>
<comment type="subunit">
    <text evidence="1">Monomer.</text>
</comment>
<comment type="similarity">
    <text evidence="1">Belongs to the acetyltransferase family. MshD subfamily.</text>
</comment>
<sequence>MNSTEPDSARVTRTDRLDPPEIADVLTLARAAGDADGADPFDEHTLLRLRDPHAPAHHLTVRAADGILAGYAHLDSTDPAAGTGVELAVHPTYRRQGIGRALARAVRATVTGPLRAWAHGDHPSAAALAVDLGYRRARVLWQLRRPLSAPIPQPPLPEGVTLRAFRPGTDDDAWLALNARAFADHPEQGRWTSADLRARRDEPWFDAAGFLLAVDPAGHLRGFHWTKVHERPGSPRIGEVYVLGVDPQAHGGGLGKALTAAGLAYLRDRRGLDRVMLYVDESNTAAVALYERLGFARWSAHVNYQRS</sequence>
<dbReference type="EC" id="2.3.1.189" evidence="1"/>
<dbReference type="EMBL" id="CP000850">
    <property type="protein sequence ID" value="ABV96265.1"/>
    <property type="molecule type" value="Genomic_DNA"/>
</dbReference>
<dbReference type="SMR" id="A8LYQ4"/>
<dbReference type="STRING" id="391037.Sare_0335"/>
<dbReference type="KEGG" id="saq:Sare_0335"/>
<dbReference type="PATRIC" id="fig|391037.6.peg.342"/>
<dbReference type="eggNOG" id="COG0456">
    <property type="taxonomic scope" value="Bacteria"/>
</dbReference>
<dbReference type="HOGENOM" id="CLU_068014_0_0_11"/>
<dbReference type="OrthoDB" id="3208058at2"/>
<dbReference type="GO" id="GO:0035447">
    <property type="term" value="F:mycothiol synthase activity"/>
    <property type="evidence" value="ECO:0007669"/>
    <property type="project" value="UniProtKB-UniRule"/>
</dbReference>
<dbReference type="GO" id="GO:0010125">
    <property type="term" value="P:mycothiol biosynthetic process"/>
    <property type="evidence" value="ECO:0007669"/>
    <property type="project" value="UniProtKB-UniRule"/>
</dbReference>
<dbReference type="CDD" id="cd04301">
    <property type="entry name" value="NAT_SF"/>
    <property type="match status" value="2"/>
</dbReference>
<dbReference type="Gene3D" id="3.40.630.30">
    <property type="match status" value="1"/>
</dbReference>
<dbReference type="HAMAP" id="MF_01698">
    <property type="entry name" value="MshD"/>
    <property type="match status" value="1"/>
</dbReference>
<dbReference type="InterPro" id="IPR016181">
    <property type="entry name" value="Acyl_CoA_acyltransferase"/>
</dbReference>
<dbReference type="InterPro" id="IPR050832">
    <property type="entry name" value="Bact_Acetyltransf"/>
</dbReference>
<dbReference type="InterPro" id="IPR000182">
    <property type="entry name" value="GNAT_dom"/>
</dbReference>
<dbReference type="InterPro" id="IPR017813">
    <property type="entry name" value="Mycothiol_AcTrfase"/>
</dbReference>
<dbReference type="NCBIfam" id="TIGR03448">
    <property type="entry name" value="mycothiol_MshD"/>
    <property type="match status" value="1"/>
</dbReference>
<dbReference type="PANTHER" id="PTHR43877">
    <property type="entry name" value="AMINOALKYLPHOSPHONATE N-ACETYLTRANSFERASE-RELATED-RELATED"/>
    <property type="match status" value="1"/>
</dbReference>
<dbReference type="Pfam" id="PF00583">
    <property type="entry name" value="Acetyltransf_1"/>
    <property type="match status" value="2"/>
</dbReference>
<dbReference type="PIRSF" id="PIRSF021524">
    <property type="entry name" value="MSH_acetyltransferase"/>
    <property type="match status" value="1"/>
</dbReference>
<dbReference type="SUPFAM" id="SSF55729">
    <property type="entry name" value="Acyl-CoA N-acyltransferases (Nat)"/>
    <property type="match status" value="1"/>
</dbReference>
<dbReference type="PROSITE" id="PS51186">
    <property type="entry name" value="GNAT"/>
    <property type="match status" value="2"/>
</dbReference>
<organism>
    <name type="scientific">Salinispora arenicola (strain CNS-205)</name>
    <dbReference type="NCBI Taxonomy" id="391037"/>
    <lineage>
        <taxon>Bacteria</taxon>
        <taxon>Bacillati</taxon>
        <taxon>Actinomycetota</taxon>
        <taxon>Actinomycetes</taxon>
        <taxon>Micromonosporales</taxon>
        <taxon>Micromonosporaceae</taxon>
        <taxon>Salinispora</taxon>
    </lineage>
</organism>
<proteinExistence type="inferred from homology"/>
<reference key="1">
    <citation type="submission" date="2007-10" db="EMBL/GenBank/DDBJ databases">
        <title>Complete sequence of Salinispora arenicola CNS-205.</title>
        <authorList>
            <consortium name="US DOE Joint Genome Institute"/>
            <person name="Copeland A."/>
            <person name="Lucas S."/>
            <person name="Lapidus A."/>
            <person name="Barry K."/>
            <person name="Glavina del Rio T."/>
            <person name="Dalin E."/>
            <person name="Tice H."/>
            <person name="Pitluck S."/>
            <person name="Foster B."/>
            <person name="Schmutz J."/>
            <person name="Larimer F."/>
            <person name="Land M."/>
            <person name="Hauser L."/>
            <person name="Kyrpides N."/>
            <person name="Ivanova N."/>
            <person name="Jensen P.R."/>
            <person name="Moore B.S."/>
            <person name="Penn K."/>
            <person name="Jenkins C."/>
            <person name="Udwary D."/>
            <person name="Xiang L."/>
            <person name="Gontang E."/>
            <person name="Richardson P."/>
        </authorList>
    </citation>
    <scope>NUCLEOTIDE SEQUENCE [LARGE SCALE GENOMIC DNA]</scope>
    <source>
        <strain>CNS-205</strain>
    </source>
</reference>
<gene>
    <name evidence="1" type="primary">mshD</name>
    <name type="ordered locus">Sare_0335</name>
</gene>
<evidence type="ECO:0000255" key="1">
    <source>
        <dbReference type="HAMAP-Rule" id="MF_01698"/>
    </source>
</evidence>
<keyword id="KW-0012">Acyltransferase</keyword>
<keyword id="KW-0677">Repeat</keyword>
<keyword id="KW-0808">Transferase</keyword>
<protein>
    <recommendedName>
        <fullName evidence="1">Mycothiol acetyltransferase</fullName>
        <shortName evidence="1">MSH acetyltransferase</shortName>
        <ecNumber evidence="1">2.3.1.189</ecNumber>
    </recommendedName>
    <alternativeName>
        <fullName evidence="1">Mycothiol synthase</fullName>
    </alternativeName>
</protein>
<name>MSHD_SALAI</name>
<accession>A8LYQ4</accession>